<feature type="chain" id="PRO_0000314651" description="Adenosine 5'-monophosphoramidase hnt1">
    <location>
        <begin position="1"/>
        <end position="133"/>
    </location>
</feature>
<feature type="domain" description="HIT" evidence="4">
    <location>
        <begin position="4"/>
        <end position="107"/>
    </location>
</feature>
<feature type="short sequence motif" description="Histidine triad motif" evidence="4">
    <location>
        <begin position="92"/>
        <end position="96"/>
    </location>
</feature>
<feature type="active site" description="Tele-AMP-histidine intermediate" evidence="1">
    <location>
        <position position="94"/>
    </location>
</feature>
<feature type="binding site" evidence="1">
    <location>
        <begin position="29"/>
        <end position="30"/>
    </location>
    <ligand>
        <name>AMP</name>
        <dbReference type="ChEBI" id="CHEBI:456215"/>
    </ligand>
</feature>
<feature type="binding site" evidence="1">
    <location>
        <position position="81"/>
    </location>
    <ligand>
        <name>AMP</name>
        <dbReference type="ChEBI" id="CHEBI:456215"/>
    </ligand>
</feature>
<feature type="binding site" evidence="1">
    <location>
        <begin position="87"/>
        <end position="89"/>
    </location>
    <ligand>
        <name>AMP</name>
        <dbReference type="ChEBI" id="CHEBI:456215"/>
    </ligand>
</feature>
<feature type="binding site" evidence="1">
    <location>
        <begin position="94"/>
        <end position="96"/>
    </location>
    <ligand>
        <name>AMP</name>
        <dbReference type="ChEBI" id="CHEBI:456215"/>
    </ligand>
</feature>
<reference key="1">
    <citation type="journal article" date="2002" name="Nature">
        <title>The genome sequence of Schizosaccharomyces pombe.</title>
        <authorList>
            <person name="Wood V."/>
            <person name="Gwilliam R."/>
            <person name="Rajandream M.A."/>
            <person name="Lyne M.H."/>
            <person name="Lyne R."/>
            <person name="Stewart A."/>
            <person name="Sgouros J.G."/>
            <person name="Peat N."/>
            <person name="Hayles J."/>
            <person name="Baker S.G."/>
            <person name="Basham D."/>
            <person name="Bowman S."/>
            <person name="Brooks K."/>
            <person name="Brown D."/>
            <person name="Brown S."/>
            <person name="Chillingworth T."/>
            <person name="Churcher C.M."/>
            <person name="Collins M."/>
            <person name="Connor R."/>
            <person name="Cronin A."/>
            <person name="Davis P."/>
            <person name="Feltwell T."/>
            <person name="Fraser A."/>
            <person name="Gentles S."/>
            <person name="Goble A."/>
            <person name="Hamlin N."/>
            <person name="Harris D.E."/>
            <person name="Hidalgo J."/>
            <person name="Hodgson G."/>
            <person name="Holroyd S."/>
            <person name="Hornsby T."/>
            <person name="Howarth S."/>
            <person name="Huckle E.J."/>
            <person name="Hunt S."/>
            <person name="Jagels K."/>
            <person name="James K.D."/>
            <person name="Jones L."/>
            <person name="Jones M."/>
            <person name="Leather S."/>
            <person name="McDonald S."/>
            <person name="McLean J."/>
            <person name="Mooney P."/>
            <person name="Moule S."/>
            <person name="Mungall K.L."/>
            <person name="Murphy L.D."/>
            <person name="Niblett D."/>
            <person name="Odell C."/>
            <person name="Oliver K."/>
            <person name="O'Neil S."/>
            <person name="Pearson D."/>
            <person name="Quail M.A."/>
            <person name="Rabbinowitsch E."/>
            <person name="Rutherford K.M."/>
            <person name="Rutter S."/>
            <person name="Saunders D."/>
            <person name="Seeger K."/>
            <person name="Sharp S."/>
            <person name="Skelton J."/>
            <person name="Simmonds M.N."/>
            <person name="Squares R."/>
            <person name="Squares S."/>
            <person name="Stevens K."/>
            <person name="Taylor K."/>
            <person name="Taylor R.G."/>
            <person name="Tivey A."/>
            <person name="Walsh S.V."/>
            <person name="Warren T."/>
            <person name="Whitehead S."/>
            <person name="Woodward J.R."/>
            <person name="Volckaert G."/>
            <person name="Aert R."/>
            <person name="Robben J."/>
            <person name="Grymonprez B."/>
            <person name="Weltjens I."/>
            <person name="Vanstreels E."/>
            <person name="Rieger M."/>
            <person name="Schaefer M."/>
            <person name="Mueller-Auer S."/>
            <person name="Gabel C."/>
            <person name="Fuchs M."/>
            <person name="Duesterhoeft A."/>
            <person name="Fritzc C."/>
            <person name="Holzer E."/>
            <person name="Moestl D."/>
            <person name="Hilbert H."/>
            <person name="Borzym K."/>
            <person name="Langer I."/>
            <person name="Beck A."/>
            <person name="Lehrach H."/>
            <person name="Reinhardt R."/>
            <person name="Pohl T.M."/>
            <person name="Eger P."/>
            <person name="Zimmermann W."/>
            <person name="Wedler H."/>
            <person name="Wambutt R."/>
            <person name="Purnelle B."/>
            <person name="Goffeau A."/>
            <person name="Cadieu E."/>
            <person name="Dreano S."/>
            <person name="Gloux S."/>
            <person name="Lelaure V."/>
            <person name="Mottier S."/>
            <person name="Galibert F."/>
            <person name="Aves S.J."/>
            <person name="Xiang Z."/>
            <person name="Hunt C."/>
            <person name="Moore K."/>
            <person name="Hurst S.M."/>
            <person name="Lucas M."/>
            <person name="Rochet M."/>
            <person name="Gaillardin C."/>
            <person name="Tallada V.A."/>
            <person name="Garzon A."/>
            <person name="Thode G."/>
            <person name="Daga R.R."/>
            <person name="Cruzado L."/>
            <person name="Jimenez J."/>
            <person name="Sanchez M."/>
            <person name="del Rey F."/>
            <person name="Benito J."/>
            <person name="Dominguez A."/>
            <person name="Revuelta J.L."/>
            <person name="Moreno S."/>
            <person name="Armstrong J."/>
            <person name="Forsburg S.L."/>
            <person name="Cerutti L."/>
            <person name="Lowe T."/>
            <person name="McCombie W.R."/>
            <person name="Paulsen I."/>
            <person name="Potashkin J."/>
            <person name="Shpakovski G.V."/>
            <person name="Ussery D."/>
            <person name="Barrell B.G."/>
            <person name="Nurse P."/>
        </authorList>
    </citation>
    <scope>NUCLEOTIDE SEQUENCE [LARGE SCALE GENOMIC DNA]</scope>
    <source>
        <strain>972 / ATCC 24843</strain>
    </source>
</reference>
<reference key="2">
    <citation type="journal article" date="2006" name="Nat. Biotechnol.">
        <title>ORFeome cloning and global analysis of protein localization in the fission yeast Schizosaccharomyces pombe.</title>
        <authorList>
            <person name="Matsuyama A."/>
            <person name="Arai R."/>
            <person name="Yashiroda Y."/>
            <person name="Shirai A."/>
            <person name="Kamata A."/>
            <person name="Sekido S."/>
            <person name="Kobayashi Y."/>
            <person name="Hashimoto A."/>
            <person name="Hamamoto M."/>
            <person name="Hiraoka Y."/>
            <person name="Horinouchi S."/>
            <person name="Yoshida M."/>
        </authorList>
    </citation>
    <scope>SUBCELLULAR LOCATION [LARGE SCALE ANALYSIS]</scope>
</reference>
<name>HNT1_SCHPO</name>
<sequence length="133" mass="14580">MSCIFCKIVKGDIPCVKLAETALSLAFLDIAPTSKGHALVIPKEHAAKMHELSDESCADILPLVKKVTKAIGPENYNVLQNNGRIAHQFVDHVHFHIIPKPNEEYGLGVGWPSYPISPEEIKALGEEISSKIK</sequence>
<keyword id="KW-0378">Hydrolase</keyword>
<keyword id="KW-0460">Magnesium</keyword>
<keyword id="KW-0547">Nucleotide-binding</keyword>
<keyword id="KW-0539">Nucleus</keyword>
<keyword id="KW-1185">Reference proteome</keyword>
<evidence type="ECO:0000250" key="1">
    <source>
        <dbReference type="UniProtKB" id="P49773"/>
    </source>
</evidence>
<evidence type="ECO:0000250" key="2">
    <source>
        <dbReference type="UniProtKB" id="Q04344"/>
    </source>
</evidence>
<evidence type="ECO:0000250" key="3">
    <source>
        <dbReference type="UniProtKB" id="Q59WG0"/>
    </source>
</evidence>
<evidence type="ECO:0000255" key="4">
    <source>
        <dbReference type="PROSITE-ProRule" id="PRU00464"/>
    </source>
</evidence>
<evidence type="ECO:0000269" key="5">
    <source>
    </source>
</evidence>
<evidence type="ECO:0000305" key="6"/>
<gene>
    <name type="primary">hnt1</name>
    <name type="ORF">SPCC1442.14c</name>
</gene>
<protein>
    <recommendedName>
        <fullName evidence="1">Adenosine 5'-monophosphoramidase hnt1</fullName>
        <ecNumber evidence="1">3.-.-.-</ecNumber>
    </recommendedName>
    <alternativeName>
        <fullName evidence="1">Histidine triad nucleotide-binding protein HNT1</fullName>
        <shortName evidence="1">HINT</shortName>
    </alternativeName>
    <alternativeName>
        <fullName evidence="1">Hit family protein 1</fullName>
    </alternativeName>
</protein>
<comment type="function">
    <text evidence="1">Hydrolyzes adenosine 5'-monophosphoramidate substrates such as AMP-morpholidate, AMP-N-alanine methyl ester, AMP-alpha-acetyl lysine methyl ester and AMP-NH2.</text>
</comment>
<comment type="catalytic activity">
    <reaction evidence="1">
        <text>adenosine 5'-phosphoramidate + H2O = AMP + NH4(+)</text>
        <dbReference type="Rhea" id="RHEA:67916"/>
        <dbReference type="ChEBI" id="CHEBI:15377"/>
        <dbReference type="ChEBI" id="CHEBI:28938"/>
        <dbReference type="ChEBI" id="CHEBI:57890"/>
        <dbReference type="ChEBI" id="CHEBI:456215"/>
    </reaction>
    <physiologicalReaction direction="left-to-right" evidence="1">
        <dbReference type="Rhea" id="RHEA:67917"/>
    </physiologicalReaction>
</comment>
<comment type="cofactor">
    <cofactor evidence="2">
        <name>Mg(2+)</name>
        <dbReference type="ChEBI" id="CHEBI:18420"/>
    </cofactor>
</comment>
<comment type="subunit">
    <text evidence="3">Homodimer.</text>
</comment>
<comment type="subcellular location">
    <subcellularLocation>
        <location evidence="5">Nucleus</location>
    </subcellularLocation>
</comment>
<comment type="similarity">
    <text evidence="6">Belongs to the HINT family.</text>
</comment>
<dbReference type="EC" id="3.-.-.-" evidence="1"/>
<dbReference type="EMBL" id="CU329672">
    <property type="protein sequence ID" value="CAA21448.1"/>
    <property type="molecule type" value="Genomic_DNA"/>
</dbReference>
<dbReference type="PIR" id="T40979">
    <property type="entry name" value="T40979"/>
</dbReference>
<dbReference type="RefSeq" id="NP_588328.1">
    <property type="nucleotide sequence ID" value="NM_001023319.2"/>
</dbReference>
<dbReference type="SMR" id="O94586"/>
<dbReference type="BioGRID" id="275405">
    <property type="interactions" value="13"/>
</dbReference>
<dbReference type="FunCoup" id="O94586">
    <property type="interactions" value="208"/>
</dbReference>
<dbReference type="STRING" id="284812.O94586"/>
<dbReference type="PaxDb" id="4896-SPCC1442.14c.1"/>
<dbReference type="EnsemblFungi" id="SPCC1442.14c.1">
    <property type="protein sequence ID" value="SPCC1442.14c.1:pep"/>
    <property type="gene ID" value="SPCC1442.14c"/>
</dbReference>
<dbReference type="GeneID" id="2538824"/>
<dbReference type="KEGG" id="spo:2538824"/>
<dbReference type="PomBase" id="SPCC1442.14c">
    <property type="gene designation" value="hnt1"/>
</dbReference>
<dbReference type="VEuPathDB" id="FungiDB:SPCC1442.14c"/>
<dbReference type="eggNOG" id="KOG3275">
    <property type="taxonomic scope" value="Eukaryota"/>
</dbReference>
<dbReference type="HOGENOM" id="CLU_056776_3_0_1"/>
<dbReference type="InParanoid" id="O94586"/>
<dbReference type="OMA" id="YRVVMNC"/>
<dbReference type="PhylomeDB" id="O94586"/>
<dbReference type="PRO" id="PR:O94586"/>
<dbReference type="Proteomes" id="UP000002485">
    <property type="component" value="Chromosome III"/>
</dbReference>
<dbReference type="GO" id="GO:0005829">
    <property type="term" value="C:cytosol"/>
    <property type="evidence" value="ECO:0007005"/>
    <property type="project" value="PomBase"/>
</dbReference>
<dbReference type="GO" id="GO:0005634">
    <property type="term" value="C:nucleus"/>
    <property type="evidence" value="ECO:0007005"/>
    <property type="project" value="PomBase"/>
</dbReference>
<dbReference type="GO" id="GO:0043530">
    <property type="term" value="F:adenosine 5'-monophosphoramidase activity"/>
    <property type="evidence" value="ECO:0000266"/>
    <property type="project" value="PomBase"/>
</dbReference>
<dbReference type="GO" id="GO:0000166">
    <property type="term" value="F:nucleotide binding"/>
    <property type="evidence" value="ECO:0007669"/>
    <property type="project" value="UniProtKB-KW"/>
</dbReference>
<dbReference type="GO" id="GO:0009117">
    <property type="term" value="P:nucleotide metabolic process"/>
    <property type="evidence" value="ECO:0000318"/>
    <property type="project" value="GO_Central"/>
</dbReference>
<dbReference type="CDD" id="cd01277">
    <property type="entry name" value="HINT_subgroup"/>
    <property type="match status" value="1"/>
</dbReference>
<dbReference type="Gene3D" id="3.30.428.10">
    <property type="entry name" value="HIT-like"/>
    <property type="match status" value="1"/>
</dbReference>
<dbReference type="InterPro" id="IPR039384">
    <property type="entry name" value="HINT"/>
</dbReference>
<dbReference type="InterPro" id="IPR019808">
    <property type="entry name" value="Histidine_triad_CS"/>
</dbReference>
<dbReference type="InterPro" id="IPR001310">
    <property type="entry name" value="Histidine_triad_HIT"/>
</dbReference>
<dbReference type="InterPro" id="IPR011146">
    <property type="entry name" value="HIT-like"/>
</dbReference>
<dbReference type="InterPro" id="IPR036265">
    <property type="entry name" value="HIT-like_sf"/>
</dbReference>
<dbReference type="PANTHER" id="PTHR46648:SF1">
    <property type="entry name" value="ADENOSINE 5'-MONOPHOSPHORAMIDASE HNT1"/>
    <property type="match status" value="1"/>
</dbReference>
<dbReference type="PANTHER" id="PTHR46648">
    <property type="entry name" value="HIT FAMILY PROTEIN 1"/>
    <property type="match status" value="1"/>
</dbReference>
<dbReference type="Pfam" id="PF01230">
    <property type="entry name" value="HIT"/>
    <property type="match status" value="1"/>
</dbReference>
<dbReference type="PRINTS" id="PR00332">
    <property type="entry name" value="HISTRIAD"/>
</dbReference>
<dbReference type="SUPFAM" id="SSF54197">
    <property type="entry name" value="HIT-like"/>
    <property type="match status" value="1"/>
</dbReference>
<dbReference type="PROSITE" id="PS00892">
    <property type="entry name" value="HIT_1"/>
    <property type="match status" value="1"/>
</dbReference>
<dbReference type="PROSITE" id="PS51084">
    <property type="entry name" value="HIT_2"/>
    <property type="match status" value="1"/>
</dbReference>
<organism>
    <name type="scientific">Schizosaccharomyces pombe (strain 972 / ATCC 24843)</name>
    <name type="common">Fission yeast</name>
    <dbReference type="NCBI Taxonomy" id="284812"/>
    <lineage>
        <taxon>Eukaryota</taxon>
        <taxon>Fungi</taxon>
        <taxon>Dikarya</taxon>
        <taxon>Ascomycota</taxon>
        <taxon>Taphrinomycotina</taxon>
        <taxon>Schizosaccharomycetes</taxon>
        <taxon>Schizosaccharomycetales</taxon>
        <taxon>Schizosaccharomycetaceae</taxon>
        <taxon>Schizosaccharomyces</taxon>
    </lineage>
</organism>
<accession>O94586</accession>
<proteinExistence type="inferred from homology"/>